<gene>
    <name type="ordered locus">MIMI_L887</name>
</gene>
<name>YL887_MIMIV</name>
<evidence type="ECO:0000255" key="1"/>
<evidence type="ECO:0000255" key="2">
    <source>
        <dbReference type="PROSITE-ProRule" id="PRU00538"/>
    </source>
</evidence>
<evidence type="ECO:0000305" key="3"/>
<proteinExistence type="predicted"/>
<accession>Q5UQY3</accession>
<dbReference type="EMBL" id="AY653733">
    <property type="protein sequence ID" value="AAV51144.1"/>
    <property type="molecule type" value="Genomic_DNA"/>
</dbReference>
<dbReference type="KEGG" id="vg:9925555"/>
<dbReference type="OrthoDB" id="35868at10239"/>
<dbReference type="Proteomes" id="UP000001134">
    <property type="component" value="Genome"/>
</dbReference>
<dbReference type="GO" id="GO:0016020">
    <property type="term" value="C:membrane"/>
    <property type="evidence" value="ECO:0007669"/>
    <property type="project" value="UniProtKB-SubCell"/>
</dbReference>
<dbReference type="Gene3D" id="2.60.120.650">
    <property type="entry name" value="Cupin"/>
    <property type="match status" value="2"/>
</dbReference>
<dbReference type="InterPro" id="IPR041667">
    <property type="entry name" value="Cupin_8"/>
</dbReference>
<dbReference type="InterPro" id="IPR003347">
    <property type="entry name" value="JmjC_dom"/>
</dbReference>
<dbReference type="PANTHER" id="PTHR12461">
    <property type="entry name" value="HYPOXIA-INDUCIBLE FACTOR 1 ALPHA INHIBITOR-RELATED"/>
    <property type="match status" value="1"/>
</dbReference>
<dbReference type="PANTHER" id="PTHR12461:SF105">
    <property type="entry name" value="HYPOXIA-INDUCIBLE FACTOR 1-ALPHA INHIBITOR"/>
    <property type="match status" value="1"/>
</dbReference>
<dbReference type="Pfam" id="PF13621">
    <property type="entry name" value="Cupin_8"/>
    <property type="match status" value="2"/>
</dbReference>
<dbReference type="SUPFAM" id="SSF51197">
    <property type="entry name" value="Clavaminate synthase-like"/>
    <property type="match status" value="2"/>
</dbReference>
<dbReference type="PROSITE" id="PS51184">
    <property type="entry name" value="JMJC"/>
    <property type="match status" value="1"/>
</dbReference>
<comment type="subcellular location">
    <subcellularLocation>
        <location evidence="3">Membrane</location>
        <topology evidence="3">Single-pass membrane protein</topology>
    </subcellularLocation>
</comment>
<feature type="chain" id="PRO_0000244060" description="Putative JmjC domain-containing protein L887">
    <location>
        <begin position="1"/>
        <end position="604"/>
    </location>
</feature>
<feature type="transmembrane region" description="Helical" evidence="1">
    <location>
        <begin position="4"/>
        <end position="24"/>
    </location>
</feature>
<feature type="domain" description="JmjC" evidence="2">
    <location>
        <begin position="1"/>
        <end position="127"/>
    </location>
</feature>
<protein>
    <recommendedName>
        <fullName>Putative JmjC domain-containing protein L887</fullName>
    </recommendedName>
</protein>
<organismHost>
    <name type="scientific">Acanthamoeba polyphaga</name>
    <name type="common">Amoeba</name>
    <dbReference type="NCBI Taxonomy" id="5757"/>
</organismHost>
<keyword id="KW-0472">Membrane</keyword>
<keyword id="KW-1185">Reference proteome</keyword>
<keyword id="KW-0812">Transmembrane</keyword>
<keyword id="KW-1133">Transmembrane helix</keyword>
<sequence>MNNMKKIIIISIIIIIIIVLLFYINKSLTNSTKQSLNKIHTDNYDRHVYSNGKYAHFSKITRDDSQLYPSLKYCTKYEFELRSGDMLYIPKGWWHWIESIGRTISVNFWWDNGQIRIPNNKLNLIQPKTRGVNCNKSMVFETNYINNNNSLNNITNPIIIRNGYSSLKEKFTDKFLLDKIPKVEVWDGVNNTVENTTLKKFINSKDKHKYIITLDQFSINNHIKNILKNDVIVPTILSYTNCEYNFWFSYNYMDTGLHYDDYDGLLCVIDGIKKIKLYAPCDSPYLHSFPLFPKWSTILPPTNISYNLYKNIEWMTKPSNNSLPSSMLLFKTVHNKYLITIIDKLYNIYGSNNIIYGIKNSDGKLRWEFYFYRTDTVPGQINILDKNNPESWIPKFSKILQLHMNNVSINKPINKNNLLVSCFDYQPELFPKTDIDLYYSIPNNLKNLSELNSSDLYKIIQTTPETEISSNYPLFIAIYNHNTNLHKGNQIIDFKSSVIKNLDEYLFIFNIPQCKNWIGKTLNYYGSNKNIVCSIAVKKDTVGLFWFGLTTQEFIKFLNENQWNSEYVNWLSTNSKLFDHLSHEICIHYDYNGNPKRSAFYGII</sequence>
<organism>
    <name type="scientific">Acanthamoeba polyphaga mimivirus</name>
    <name type="common">APMV</name>
    <dbReference type="NCBI Taxonomy" id="212035"/>
    <lineage>
        <taxon>Viruses</taxon>
        <taxon>Varidnaviria</taxon>
        <taxon>Bamfordvirae</taxon>
        <taxon>Nucleocytoviricota</taxon>
        <taxon>Megaviricetes</taxon>
        <taxon>Imitervirales</taxon>
        <taxon>Mimiviridae</taxon>
        <taxon>Megamimivirinae</taxon>
        <taxon>Mimivirus</taxon>
        <taxon>Mimivirus bradfordmassiliense</taxon>
    </lineage>
</organism>
<reference key="1">
    <citation type="journal article" date="2004" name="Science">
        <title>The 1.2-megabase genome sequence of Mimivirus.</title>
        <authorList>
            <person name="Raoult D."/>
            <person name="Audic S."/>
            <person name="Robert C."/>
            <person name="Abergel C."/>
            <person name="Renesto P."/>
            <person name="Ogata H."/>
            <person name="La Scola B."/>
            <person name="Susan M."/>
            <person name="Claverie J.-M."/>
        </authorList>
    </citation>
    <scope>NUCLEOTIDE SEQUENCE [LARGE SCALE GENOMIC DNA]</scope>
    <source>
        <strain>Rowbotham-Bradford</strain>
    </source>
</reference>